<proteinExistence type="inferred from homology"/>
<organism>
    <name type="scientific">Hepatitis B virus genotype B1 (isolate Japan/Ry30/2002)</name>
    <name type="common">HBV-B</name>
    <dbReference type="NCBI Taxonomy" id="489465"/>
    <lineage>
        <taxon>Viruses</taxon>
        <taxon>Riboviria</taxon>
        <taxon>Pararnavirae</taxon>
        <taxon>Artverviricota</taxon>
        <taxon>Revtraviricetes</taxon>
        <taxon>Blubervirales</taxon>
        <taxon>Hepadnaviridae</taxon>
        <taxon>Orthohepadnavirus</taxon>
        <taxon>Hepatitis B virus</taxon>
    </lineage>
</organism>
<comment type="function">
    <text evidence="1">Multifunctional enzyme that converts the viral RNA genome into dsDNA in viral cytoplasmic capsids. This enzyme displays a DNA polymerase activity that can copy either DNA or RNA templates, and a ribonuclease H (RNase H) activity that cleaves the RNA strand of RNA-DNA heteroduplexes in a partially processive 3'- to 5'-endonucleasic mode. Neo-synthesized pregenomic RNA (pgRNA) are encapsidated together with the P protein, and reverse-transcribed inside the nucleocapsid. Initiation of reverse-transcription occurs first by binding the epsilon loop on the pgRNA genome, and is initiated by protein priming, thereby the 5'-end of (-)DNA is covalently linked to P protein. Partial (+)DNA is synthesized from the (-)DNA template and generates the relaxed circular DNA (RC-DNA) genome. After budding and infection, the RC-DNA migrates in the nucleus, and is converted into a plasmid-like covalently closed circular DNA (cccDNA). The activity of P protein does not seem to be necessary for cccDNA generation, and is presumably released from (+)DNA by host nuclear DNA repair machinery.</text>
</comment>
<comment type="catalytic activity">
    <reaction evidence="1">
        <text>DNA(n) + a 2'-deoxyribonucleoside 5'-triphosphate = DNA(n+1) + diphosphate</text>
        <dbReference type="Rhea" id="RHEA:22508"/>
        <dbReference type="Rhea" id="RHEA-COMP:17339"/>
        <dbReference type="Rhea" id="RHEA-COMP:17340"/>
        <dbReference type="ChEBI" id="CHEBI:33019"/>
        <dbReference type="ChEBI" id="CHEBI:61560"/>
        <dbReference type="ChEBI" id="CHEBI:173112"/>
        <dbReference type="EC" id="2.7.7.7"/>
    </reaction>
</comment>
<comment type="catalytic activity">
    <reaction evidence="1">
        <text>DNA(n) + a 2'-deoxyribonucleoside 5'-triphosphate = DNA(n+1) + diphosphate</text>
        <dbReference type="Rhea" id="RHEA:22508"/>
        <dbReference type="Rhea" id="RHEA-COMP:17339"/>
        <dbReference type="Rhea" id="RHEA-COMP:17340"/>
        <dbReference type="ChEBI" id="CHEBI:33019"/>
        <dbReference type="ChEBI" id="CHEBI:61560"/>
        <dbReference type="ChEBI" id="CHEBI:173112"/>
        <dbReference type="EC" id="2.7.7.49"/>
    </reaction>
</comment>
<comment type="catalytic activity">
    <reaction evidence="1">
        <text>Endonucleolytic cleavage to 5'-phosphomonoester.</text>
        <dbReference type="EC" id="3.1.26.4"/>
    </reaction>
</comment>
<comment type="activity regulation">
    <text evidence="1">Activated by host HSP70 and HSP40 in vitro to be able to bind the epsilon loop of the pgRNA. Because deletion of the RNase H region renders the protein partly chaperone-independent, the chaperones may be needed indirectly to relieve occlusion of the RNA-binding site by this domain. Inhibited by several reverse-transcriptase inhibitors: Lamivudine, Adefovir and Entecavir.</text>
</comment>
<comment type="domain">
    <text evidence="1">Terminal protein domain (TP) is hepadnavirus-specific. Spacer domain is highly variable and separates the TP and RT domains. Polymerase/reverse-transcriptase domain (RT) and ribonuclease H domain (RH) are similar to retrovirus reverse transcriptase/RNase H.</text>
</comment>
<comment type="domain">
    <text evidence="1">The polymerase/reverse transcriptase (RT) and ribonuclease H (RH) domains are structured in five subdomains: finger, palm, thumb, connection and RNase H. Within the palm subdomain, the 'primer grip' region is thought to be involved in the positioning of the primer terminus for accommodating the incoming nucleotide. The RH domain stabilizes the association of RT with primer-template.</text>
</comment>
<comment type="miscellaneous">
    <text evidence="1">Hepadnaviral virions contain probably just one P protein molecule per particle.</text>
</comment>
<comment type="similarity">
    <text evidence="1">Belongs to the hepadnaviridae P protein family.</text>
</comment>
<name>DPOL_HBVB8</name>
<reference key="1">
    <citation type="journal article" date="2002" name="J. Virol.">
        <title>Hepatitis B virus of genotype B with or without recombination with genotype C over the precore region plus the core gene.</title>
        <authorList>
            <person name="Sugauchi F."/>
            <person name="Orito E."/>
            <person name="Ichida T."/>
            <person name="Kato H."/>
            <person name="Sakugawa H."/>
            <person name="Kakumu S."/>
            <person name="Ishida T."/>
            <person name="Chutaputti A."/>
            <person name="Lai C.L."/>
            <person name="Ueda R."/>
            <person name="Miyakawa Y."/>
            <person name="Mizokami M."/>
        </authorList>
    </citation>
    <scope>NUCLEOTIDE SEQUENCE [GENOMIC DNA]</scope>
</reference>
<reference key="2">
    <citation type="journal article" date="2007" name="World J. Gastroenterol.">
        <title>Hepatitis B virus replication.</title>
        <authorList>
            <person name="Beck J."/>
            <person name="Nassal M."/>
        </authorList>
    </citation>
    <scope>REVIEW</scope>
</reference>
<accession>P0C676</accession>
<gene>
    <name evidence="1" type="primary">P</name>
</gene>
<evidence type="ECO:0000255" key="1">
    <source>
        <dbReference type="HAMAP-Rule" id="MF_04073"/>
    </source>
</evidence>
<evidence type="ECO:0000256" key="2">
    <source>
        <dbReference type="SAM" id="MobiDB-lite"/>
    </source>
</evidence>
<keyword id="KW-0235">DNA replication</keyword>
<keyword id="KW-0238">DNA-binding</keyword>
<keyword id="KW-0239">DNA-directed DNA polymerase</keyword>
<keyword id="KW-0255">Endonuclease</keyword>
<keyword id="KW-0945">Host-virus interaction</keyword>
<keyword id="KW-0378">Hydrolase</keyword>
<keyword id="KW-1090">Inhibition of host innate immune response by virus</keyword>
<keyword id="KW-1113">Inhibition of host RLR pathway by virus</keyword>
<keyword id="KW-0460">Magnesium</keyword>
<keyword id="KW-0479">Metal-binding</keyword>
<keyword id="KW-0511">Multifunctional enzyme</keyword>
<keyword id="KW-0540">Nuclease</keyword>
<keyword id="KW-0548">Nucleotidyltransferase</keyword>
<keyword id="KW-0695">RNA-directed DNA polymerase</keyword>
<keyword id="KW-0808">Transferase</keyword>
<keyword id="KW-0899">Viral immunoevasion</keyword>
<protein>
    <recommendedName>
        <fullName evidence="1">Protein P</fullName>
    </recommendedName>
    <domain>
        <recommendedName>
            <fullName evidence="1">DNA-directed DNA polymerase</fullName>
            <ecNumber evidence="1">2.7.7.7</ecNumber>
        </recommendedName>
    </domain>
    <domain>
        <recommendedName>
            <fullName evidence="1">RNA-directed DNA polymerase</fullName>
            <ecNumber evidence="1">2.7.7.49</ecNumber>
        </recommendedName>
    </domain>
    <domain>
        <recommendedName>
            <fullName evidence="1">Ribonuclease H</fullName>
            <ecNumber evidence="1">3.1.26.4</ecNumber>
        </recommendedName>
    </domain>
</protein>
<sequence length="843" mass="94225">MPLSYQHFRKLLLLDDEAGPLEEELPRLADEGLNHRVAEDLNLGNPNVDIPWTHKVGNFTGLYSSTVPVFNPEWQTPSFPDIHLQEDIVDRCEQFVGPLTVNERRRLKLVMPARFYPKVTKYLPLDKGIKPYYPEHVVNHYFQTRHYLHTLWKAGILYKRESTHSASFCGSPYSWEQDLQHGRLVIQTSKRHGDKSFCPQSPGILPRSSVGPCIQSQLRKSRLGPQPTQGQLAGRPQGGSGSIRARVHPSPWGTVGVEPSGSGHTHICASSSSSCLHQSAVRTAAYSLISTSKGHSSSGHAVELHHFPPNSSRSQSQGPVPSCWWLQFRNSKPCSEYCLCHIVNLIDDWGPCAEHGEHRIRTPRTPARVTGGVFLVDKNPHNTTESRLVVDFSQFSRGNTRVSWPKFAVPNLQSLTNLLSSNLSWLSLDVSAAFYHLPLHPAAMPHLLVGSSGLSRYVARLSSNSRIINHQHGTMQDLHNSCSRNLYVSLMLLYKTYGRKLHLYSHPIILGFRKIPMGVGLSPFLLAQFTSALCSVVRRAFPHCLAFSYMDDVVLGAKSVQHLESLYAAVTNFLLSLGXHLNPHKTKRWGYSLNFMGYVIGSWGTLPQEHIVQKIKLCFRKLPVNRPIDWKVCQRIVGLLGFAAPFTQCGYPALKPLYACIQAKQAFTFSPTYKAFLRQQYLNLYPVARQRPGLCQVFADATPTGWGLAIGHQRMRGTFVSPLPIHTAELLAACFARSRSGAKLIGTDNSVVLSRKYTSFPWLLGCAANWILRGTSFVYVPSALNPADDPSRGRLGLYRPLLRLPYRPTTGRTSLYAVSPSVPSHLPDRVHFASPLHVAWRPP</sequence>
<organismHost>
    <name type="scientific">Homo sapiens</name>
    <name type="common">Human</name>
    <dbReference type="NCBI Taxonomy" id="9606"/>
</organismHost>
<organismHost>
    <name type="scientific">Pan troglodytes</name>
    <name type="common">Chimpanzee</name>
    <dbReference type="NCBI Taxonomy" id="9598"/>
</organismHost>
<dbReference type="EC" id="2.7.7.7" evidence="1"/>
<dbReference type="EC" id="2.7.7.49" evidence="1"/>
<dbReference type="EC" id="3.1.26.4" evidence="1"/>
<dbReference type="EMBL" id="AB073854">
    <property type="status" value="NOT_ANNOTATED_CDS"/>
    <property type="molecule type" value="Genomic_DNA"/>
</dbReference>
<dbReference type="Proteomes" id="UP000007919">
    <property type="component" value="Genome"/>
</dbReference>
<dbReference type="GO" id="GO:0003677">
    <property type="term" value="F:DNA binding"/>
    <property type="evidence" value="ECO:0007669"/>
    <property type="project" value="UniProtKB-UniRule"/>
</dbReference>
<dbReference type="GO" id="GO:0003887">
    <property type="term" value="F:DNA-directed DNA polymerase activity"/>
    <property type="evidence" value="ECO:0007669"/>
    <property type="project" value="UniProtKB-UniRule"/>
</dbReference>
<dbReference type="GO" id="GO:0046872">
    <property type="term" value="F:metal ion binding"/>
    <property type="evidence" value="ECO:0007669"/>
    <property type="project" value="UniProtKB-UniRule"/>
</dbReference>
<dbReference type="GO" id="GO:0003964">
    <property type="term" value="F:RNA-directed DNA polymerase activity"/>
    <property type="evidence" value="ECO:0007669"/>
    <property type="project" value="UniProtKB-UniRule"/>
</dbReference>
<dbReference type="GO" id="GO:0004523">
    <property type="term" value="F:RNA-DNA hybrid ribonuclease activity"/>
    <property type="evidence" value="ECO:0007669"/>
    <property type="project" value="UniProtKB-UniRule"/>
</dbReference>
<dbReference type="GO" id="GO:0006260">
    <property type="term" value="P:DNA replication"/>
    <property type="evidence" value="ECO:0007669"/>
    <property type="project" value="UniProtKB-UniRule"/>
</dbReference>
<dbReference type="GO" id="GO:0052170">
    <property type="term" value="P:symbiont-mediated suppression of host innate immune response"/>
    <property type="evidence" value="ECO:0007669"/>
    <property type="project" value="UniProtKB-UniRule"/>
</dbReference>
<dbReference type="FunFam" id="3.30.70.270:FF:000009">
    <property type="entry name" value="Protein P"/>
    <property type="match status" value="1"/>
</dbReference>
<dbReference type="Gene3D" id="3.30.70.270">
    <property type="match status" value="1"/>
</dbReference>
<dbReference type="HAMAP" id="MF_04073">
    <property type="entry name" value="HBV_DPOL"/>
    <property type="match status" value="1"/>
</dbReference>
<dbReference type="InterPro" id="IPR043502">
    <property type="entry name" value="DNA/RNA_pol_sf"/>
</dbReference>
<dbReference type="InterPro" id="IPR001462">
    <property type="entry name" value="DNApol_viral_C"/>
</dbReference>
<dbReference type="InterPro" id="IPR000201">
    <property type="entry name" value="DNApol_viral_N"/>
</dbReference>
<dbReference type="InterPro" id="IPR037531">
    <property type="entry name" value="HBV_DPOL"/>
</dbReference>
<dbReference type="InterPro" id="IPR043128">
    <property type="entry name" value="Rev_trsase/Diguanyl_cyclase"/>
</dbReference>
<dbReference type="InterPro" id="IPR000477">
    <property type="entry name" value="RT_dom"/>
</dbReference>
<dbReference type="InterPro" id="IPR051320">
    <property type="entry name" value="Viral_Replic_Matur_Polypro"/>
</dbReference>
<dbReference type="PANTHER" id="PTHR33064:SF29">
    <property type="entry name" value="PEPTIDASE A2 DOMAIN-CONTAINING PROTEIN-RELATED"/>
    <property type="match status" value="1"/>
</dbReference>
<dbReference type="PANTHER" id="PTHR33064">
    <property type="entry name" value="POL PROTEIN"/>
    <property type="match status" value="1"/>
</dbReference>
<dbReference type="Pfam" id="PF00336">
    <property type="entry name" value="DNA_pol_viral_C"/>
    <property type="match status" value="1"/>
</dbReference>
<dbReference type="Pfam" id="PF00242">
    <property type="entry name" value="DNA_pol_viral_N"/>
    <property type="match status" value="1"/>
</dbReference>
<dbReference type="Pfam" id="PF00078">
    <property type="entry name" value="RVT_1"/>
    <property type="match status" value="1"/>
</dbReference>
<dbReference type="SUPFAM" id="SSF56672">
    <property type="entry name" value="DNA/RNA polymerases"/>
    <property type="match status" value="1"/>
</dbReference>
<dbReference type="PROSITE" id="PS50878">
    <property type="entry name" value="RT_POL"/>
    <property type="match status" value="1"/>
</dbReference>
<feature type="chain" id="PRO_0000323259" description="Protein P">
    <location>
        <begin position="1"/>
        <end position="843"/>
    </location>
</feature>
<feature type="domain" description="Reverse transcriptase" evidence="1">
    <location>
        <begin position="357"/>
        <end position="600"/>
    </location>
</feature>
<feature type="region of interest" description="Terminal protein domain (TP)" evidence="1">
    <location>
        <begin position="1"/>
        <end position="177"/>
    </location>
</feature>
<feature type="region of interest" description="Spacer" evidence="1">
    <location>
        <begin position="178"/>
        <end position="346"/>
    </location>
</feature>
<feature type="region of interest" description="Disordered" evidence="2">
    <location>
        <begin position="219"/>
        <end position="258"/>
    </location>
</feature>
<feature type="region of interest" description="Disordered" evidence="2">
    <location>
        <begin position="297"/>
        <end position="316"/>
    </location>
</feature>
<feature type="region of interest" description="Polymerase/reverse transcriptase domain (RT)" evidence="1">
    <location>
        <begin position="347"/>
        <end position="690"/>
    </location>
</feature>
<feature type="binding site" evidence="1">
    <location>
        <position position="429"/>
    </location>
    <ligand>
        <name>Mg(2+)</name>
        <dbReference type="ChEBI" id="CHEBI:18420"/>
        <note>catalytic</note>
    </ligand>
</feature>
<feature type="binding site" evidence="1">
    <location>
        <position position="551"/>
    </location>
    <ligand>
        <name>Mg(2+)</name>
        <dbReference type="ChEBI" id="CHEBI:18420"/>
        <note>catalytic</note>
    </ligand>
</feature>
<feature type="binding site" evidence="1">
    <location>
        <position position="552"/>
    </location>
    <ligand>
        <name>Mg(2+)</name>
        <dbReference type="ChEBI" id="CHEBI:18420"/>
        <note>catalytic</note>
    </ligand>
</feature>
<feature type="site" description="Priming of reverse-transcription by covalently linking the first nucleotide of the (-)DNA" evidence="1">
    <location>
        <position position="63"/>
    </location>
</feature>